<keyword id="KW-0031">Aminopeptidase</keyword>
<keyword id="KW-0378">Hydrolase</keyword>
<keyword id="KW-0479">Metal-binding</keyword>
<keyword id="KW-0482">Metalloprotease</keyword>
<keyword id="KW-0645">Protease</keyword>
<keyword id="KW-1185">Reference proteome</keyword>
<keyword id="KW-0862">Zinc</keyword>
<evidence type="ECO:0000250" key="1"/>
<evidence type="ECO:0000255" key="2"/>
<evidence type="ECO:0000305" key="3"/>
<name>APEB_BORBU</name>
<feature type="chain" id="PRO_0000173460" description="Probable M18 family aminopeptidase 2">
    <location>
        <begin position="1"/>
        <end position="423"/>
    </location>
</feature>
<feature type="binding site" evidence="2">
    <location>
        <position position="84"/>
    </location>
    <ligand>
        <name>Zn(2+)</name>
        <dbReference type="ChEBI" id="CHEBI:29105"/>
    </ligand>
</feature>
<feature type="binding site" evidence="2">
    <location>
        <position position="157"/>
    </location>
    <ligand>
        <name>Zn(2+)</name>
        <dbReference type="ChEBI" id="CHEBI:29105"/>
    </ligand>
</feature>
<feature type="binding site" evidence="2">
    <location>
        <position position="397"/>
    </location>
    <ligand>
        <name>Zn(2+)</name>
        <dbReference type="ChEBI" id="CHEBI:29105"/>
    </ligand>
</feature>
<dbReference type="EC" id="3.4.11.-"/>
<dbReference type="EMBL" id="AE000783">
    <property type="status" value="NOT_ANNOTATED_CDS"/>
    <property type="molecule type" value="Genomic_DNA"/>
</dbReference>
<dbReference type="PIR" id="B70178">
    <property type="entry name" value="B70178"/>
</dbReference>
<dbReference type="RefSeq" id="WP_023003298.1">
    <property type="nucleotide sequence ID" value="NC_001318.1"/>
</dbReference>
<dbReference type="RefSeq" id="YP_008686584.1">
    <property type="nucleotide sequence ID" value="NC_001318.1"/>
</dbReference>
<dbReference type="PATRIC" id="fig|224326.49.peg.1017"/>
<dbReference type="OrthoDB" id="9764268at2"/>
<dbReference type="Proteomes" id="UP000001807">
    <property type="component" value="Chromosome"/>
</dbReference>
<dbReference type="GO" id="GO:0005829">
    <property type="term" value="C:cytosol"/>
    <property type="evidence" value="ECO:0000314"/>
    <property type="project" value="CAFA"/>
</dbReference>
<dbReference type="GO" id="GO:0004177">
    <property type="term" value="F:aminopeptidase activity"/>
    <property type="evidence" value="ECO:0007669"/>
    <property type="project" value="UniProtKB-UniRule"/>
</dbReference>
<dbReference type="GO" id="GO:0008237">
    <property type="term" value="F:metallopeptidase activity"/>
    <property type="evidence" value="ECO:0007669"/>
    <property type="project" value="UniProtKB-UniRule"/>
</dbReference>
<dbReference type="GO" id="GO:0008270">
    <property type="term" value="F:zinc ion binding"/>
    <property type="evidence" value="ECO:0007669"/>
    <property type="project" value="UniProtKB-UniRule"/>
</dbReference>
<dbReference type="GO" id="GO:0006508">
    <property type="term" value="P:proteolysis"/>
    <property type="evidence" value="ECO:0007669"/>
    <property type="project" value="UniProtKB-UniRule"/>
</dbReference>
<dbReference type="Gene3D" id="2.30.250.10">
    <property type="entry name" value="Aminopeptidase i, Domain 2"/>
    <property type="match status" value="1"/>
</dbReference>
<dbReference type="Gene3D" id="3.40.630.10">
    <property type="entry name" value="Zn peptidases"/>
    <property type="match status" value="1"/>
</dbReference>
<dbReference type="HAMAP" id="MF_00467">
    <property type="entry name" value="Aminopeptidase_M18_2"/>
    <property type="match status" value="1"/>
</dbReference>
<dbReference type="InterPro" id="IPR022984">
    <property type="entry name" value="M18_aminopeptidase_2"/>
</dbReference>
<dbReference type="InterPro" id="IPR001948">
    <property type="entry name" value="Peptidase_M18"/>
</dbReference>
<dbReference type="InterPro" id="IPR023358">
    <property type="entry name" value="Peptidase_M18_dom2"/>
</dbReference>
<dbReference type="NCBIfam" id="NF002759">
    <property type="entry name" value="PRK02813.1"/>
    <property type="match status" value="1"/>
</dbReference>
<dbReference type="PANTHER" id="PTHR28570">
    <property type="entry name" value="ASPARTYL AMINOPEPTIDASE"/>
    <property type="match status" value="1"/>
</dbReference>
<dbReference type="PANTHER" id="PTHR28570:SF3">
    <property type="entry name" value="ASPARTYL AMINOPEPTIDASE"/>
    <property type="match status" value="1"/>
</dbReference>
<dbReference type="Pfam" id="PF02127">
    <property type="entry name" value="Peptidase_M18"/>
    <property type="match status" value="1"/>
</dbReference>
<dbReference type="PRINTS" id="PR00932">
    <property type="entry name" value="AMINO1PTASE"/>
</dbReference>
<dbReference type="SUPFAM" id="SSF101821">
    <property type="entry name" value="Aminopeptidase/glucanase lid domain"/>
    <property type="match status" value="1"/>
</dbReference>
<dbReference type="SUPFAM" id="SSF53187">
    <property type="entry name" value="Zn-dependent exopeptidases"/>
    <property type="match status" value="1"/>
</dbReference>
<reference key="1">
    <citation type="journal article" date="1997" name="Nature">
        <title>Genomic sequence of a Lyme disease spirochaete, Borrelia burgdorferi.</title>
        <authorList>
            <person name="Fraser C.M."/>
            <person name="Casjens S."/>
            <person name="Huang W.M."/>
            <person name="Sutton G.G."/>
            <person name="Clayton R.A."/>
            <person name="Lathigra R."/>
            <person name="White O."/>
            <person name="Ketchum K.A."/>
            <person name="Dodson R.J."/>
            <person name="Hickey E.K."/>
            <person name="Gwinn M.L."/>
            <person name="Dougherty B.A."/>
            <person name="Tomb J.-F."/>
            <person name="Fleischmann R.D."/>
            <person name="Richardson D.L."/>
            <person name="Peterson J.D."/>
            <person name="Kerlavage A.R."/>
            <person name="Quackenbush J."/>
            <person name="Salzberg S.L."/>
            <person name="Hanson M."/>
            <person name="van Vugt R."/>
            <person name="Palmer N."/>
            <person name="Adams M.D."/>
            <person name="Gocayne J.D."/>
            <person name="Weidman J.F."/>
            <person name="Utterback T.R."/>
            <person name="Watthey L."/>
            <person name="McDonald L.A."/>
            <person name="Artiach P."/>
            <person name="Bowman C."/>
            <person name="Garland S.A."/>
            <person name="Fujii C."/>
            <person name="Cotton M.D."/>
            <person name="Horst K."/>
            <person name="Roberts K.M."/>
            <person name="Hatch B."/>
            <person name="Smith H.O."/>
            <person name="Venter J.C."/>
        </authorList>
    </citation>
    <scope>NUCLEOTIDE SEQUENCE [LARGE SCALE GENOMIC DNA]</scope>
    <source>
        <strain>ATCC 35210 / DSM 4680 / CIP 102532 / B31</strain>
    </source>
</reference>
<comment type="cofactor">
    <cofactor evidence="1">
        <name>Zn(2+)</name>
        <dbReference type="ChEBI" id="CHEBI:29105"/>
    </cofactor>
</comment>
<comment type="similarity">
    <text evidence="3">Belongs to the peptidase M18 family.</text>
</comment>
<gene>
    <name type="primary">apeB</name>
    <name type="ordered locus">BB_0627</name>
</gene>
<accession>O51572</accession>
<proteinExistence type="inferred from homology"/>
<sequence>MVXXKTLEPKFFQSLLDNSPTPYHLVNYIEEKLINYFNAQQLKLNEKWKIKTGSYYIKKEGTSLIAFNIDVKKKYEPFLIAAAHTDSPGLKLKIDATEKVSGVFYNHIEVYGSPIISTWIDRDLSLAGIVYFKKNENIESKLINIENIGIIPNLAIHLNRQINEGFKYNAHDNLTVISSTKKAIKDNILEQLGIECENFLSCDLIFTESQPSKIIGTEGEFLASKNLDNKSGCHAIMNSYVHTSNDKNKIAVFFDNEEVGSLTSRGADSNFLSEVLERIDIALDLTREEHLIKTNKSFNISIDSVHGIHPGYTSKHDPNYQANLGKGVVVKNSANFRYATTSTGFAKLKNLAIKNNIKIQEIIMKANVPSGTTIGPISNARTGIETIDIGTPMWAMHSLRETVSIADHIEAIKLLRAFFEKGI</sequence>
<protein>
    <recommendedName>
        <fullName>Probable M18 family aminopeptidase 2</fullName>
        <ecNumber>3.4.11.-</ecNumber>
    </recommendedName>
</protein>
<organism>
    <name type="scientific">Borreliella burgdorferi (strain ATCC 35210 / DSM 4680 / CIP 102532 / B31)</name>
    <name type="common">Borrelia burgdorferi</name>
    <dbReference type="NCBI Taxonomy" id="224326"/>
    <lineage>
        <taxon>Bacteria</taxon>
        <taxon>Pseudomonadati</taxon>
        <taxon>Spirochaetota</taxon>
        <taxon>Spirochaetia</taxon>
        <taxon>Spirochaetales</taxon>
        <taxon>Borreliaceae</taxon>
        <taxon>Borreliella</taxon>
    </lineage>
</organism>